<protein>
    <recommendedName>
        <fullName evidence="1">Enolase</fullName>
        <ecNumber evidence="1">4.2.1.11</ecNumber>
    </recommendedName>
    <alternativeName>
        <fullName evidence="1">2-phospho-D-glycerate hydro-lyase</fullName>
    </alternativeName>
    <alternativeName>
        <fullName evidence="1">2-phosphoglycerate dehydratase</fullName>
    </alternativeName>
</protein>
<comment type="function">
    <text evidence="1">Catalyzes the reversible conversion of 2-phosphoglycerate (2-PG) into phosphoenolpyruvate (PEP). It is essential for the degradation of carbohydrates via glycolysis.</text>
</comment>
<comment type="catalytic activity">
    <reaction evidence="1">
        <text>(2R)-2-phosphoglycerate = phosphoenolpyruvate + H2O</text>
        <dbReference type="Rhea" id="RHEA:10164"/>
        <dbReference type="ChEBI" id="CHEBI:15377"/>
        <dbReference type="ChEBI" id="CHEBI:58289"/>
        <dbReference type="ChEBI" id="CHEBI:58702"/>
        <dbReference type="EC" id="4.2.1.11"/>
    </reaction>
</comment>
<comment type="cofactor">
    <cofactor evidence="1">
        <name>Mg(2+)</name>
        <dbReference type="ChEBI" id="CHEBI:18420"/>
    </cofactor>
    <text evidence="1">Binds a second Mg(2+) ion via substrate during catalysis.</text>
</comment>
<comment type="pathway">
    <text evidence="1">Carbohydrate degradation; glycolysis; pyruvate from D-glyceraldehyde 3-phosphate: step 4/5.</text>
</comment>
<comment type="subunit">
    <text evidence="1">Component of the RNA degradosome, a multiprotein complex involved in RNA processing and mRNA degradation.</text>
</comment>
<comment type="subcellular location">
    <subcellularLocation>
        <location evidence="1">Cytoplasm</location>
    </subcellularLocation>
    <subcellularLocation>
        <location evidence="1">Secreted</location>
    </subcellularLocation>
    <subcellularLocation>
        <location evidence="1">Cell surface</location>
    </subcellularLocation>
    <text evidence="1">Fractions of enolase are present in both the cytoplasm and on the cell surface.</text>
</comment>
<comment type="similarity">
    <text evidence="1">Belongs to the enolase family.</text>
</comment>
<proteinExistence type="inferred from homology"/>
<organism>
    <name type="scientific">Shewanella baltica (strain OS195)</name>
    <dbReference type="NCBI Taxonomy" id="399599"/>
    <lineage>
        <taxon>Bacteria</taxon>
        <taxon>Pseudomonadati</taxon>
        <taxon>Pseudomonadota</taxon>
        <taxon>Gammaproteobacteria</taxon>
        <taxon>Alteromonadales</taxon>
        <taxon>Shewanellaceae</taxon>
        <taxon>Shewanella</taxon>
    </lineage>
</organism>
<name>ENO_SHEB9</name>
<evidence type="ECO:0000255" key="1">
    <source>
        <dbReference type="HAMAP-Rule" id="MF_00318"/>
    </source>
</evidence>
<feature type="chain" id="PRO_1000079150" description="Enolase">
    <location>
        <begin position="1"/>
        <end position="431"/>
    </location>
</feature>
<feature type="active site" description="Proton donor" evidence="1">
    <location>
        <position position="209"/>
    </location>
</feature>
<feature type="active site" description="Proton acceptor" evidence="1">
    <location>
        <position position="341"/>
    </location>
</feature>
<feature type="binding site" evidence="1">
    <location>
        <position position="167"/>
    </location>
    <ligand>
        <name>(2R)-2-phosphoglycerate</name>
        <dbReference type="ChEBI" id="CHEBI:58289"/>
    </ligand>
</feature>
<feature type="binding site" evidence="1">
    <location>
        <position position="246"/>
    </location>
    <ligand>
        <name>Mg(2+)</name>
        <dbReference type="ChEBI" id="CHEBI:18420"/>
    </ligand>
</feature>
<feature type="binding site" evidence="1">
    <location>
        <position position="289"/>
    </location>
    <ligand>
        <name>Mg(2+)</name>
        <dbReference type="ChEBI" id="CHEBI:18420"/>
    </ligand>
</feature>
<feature type="binding site" evidence="1">
    <location>
        <position position="316"/>
    </location>
    <ligand>
        <name>Mg(2+)</name>
        <dbReference type="ChEBI" id="CHEBI:18420"/>
    </ligand>
</feature>
<feature type="binding site" evidence="1">
    <location>
        <position position="341"/>
    </location>
    <ligand>
        <name>(2R)-2-phosphoglycerate</name>
        <dbReference type="ChEBI" id="CHEBI:58289"/>
    </ligand>
</feature>
<feature type="binding site" evidence="1">
    <location>
        <position position="370"/>
    </location>
    <ligand>
        <name>(2R)-2-phosphoglycerate</name>
        <dbReference type="ChEBI" id="CHEBI:58289"/>
    </ligand>
</feature>
<feature type="binding site" evidence="1">
    <location>
        <position position="371"/>
    </location>
    <ligand>
        <name>(2R)-2-phosphoglycerate</name>
        <dbReference type="ChEBI" id="CHEBI:58289"/>
    </ligand>
</feature>
<feature type="binding site" evidence="1">
    <location>
        <position position="392"/>
    </location>
    <ligand>
        <name>(2R)-2-phosphoglycerate</name>
        <dbReference type="ChEBI" id="CHEBI:58289"/>
    </ligand>
</feature>
<keyword id="KW-0963">Cytoplasm</keyword>
<keyword id="KW-0324">Glycolysis</keyword>
<keyword id="KW-0456">Lyase</keyword>
<keyword id="KW-0460">Magnesium</keyword>
<keyword id="KW-0479">Metal-binding</keyword>
<keyword id="KW-0964">Secreted</keyword>
<accession>A9KYH0</accession>
<dbReference type="EC" id="4.2.1.11" evidence="1"/>
<dbReference type="EMBL" id="CP000891">
    <property type="protein sequence ID" value="ABX50441.1"/>
    <property type="molecule type" value="Genomic_DNA"/>
</dbReference>
<dbReference type="RefSeq" id="WP_006082616.1">
    <property type="nucleotide sequence ID" value="NC_009997.1"/>
</dbReference>
<dbReference type="SMR" id="A9KYH0"/>
<dbReference type="GeneID" id="11773332"/>
<dbReference type="KEGG" id="sbn:Sbal195_3279"/>
<dbReference type="HOGENOM" id="CLU_031223_2_1_6"/>
<dbReference type="UniPathway" id="UPA00109">
    <property type="reaction ID" value="UER00187"/>
</dbReference>
<dbReference type="Proteomes" id="UP000000770">
    <property type="component" value="Chromosome"/>
</dbReference>
<dbReference type="GO" id="GO:0009986">
    <property type="term" value="C:cell surface"/>
    <property type="evidence" value="ECO:0007669"/>
    <property type="project" value="UniProtKB-SubCell"/>
</dbReference>
<dbReference type="GO" id="GO:0005576">
    <property type="term" value="C:extracellular region"/>
    <property type="evidence" value="ECO:0007669"/>
    <property type="project" value="UniProtKB-SubCell"/>
</dbReference>
<dbReference type="GO" id="GO:0000015">
    <property type="term" value="C:phosphopyruvate hydratase complex"/>
    <property type="evidence" value="ECO:0007669"/>
    <property type="project" value="InterPro"/>
</dbReference>
<dbReference type="GO" id="GO:0000287">
    <property type="term" value="F:magnesium ion binding"/>
    <property type="evidence" value="ECO:0007669"/>
    <property type="project" value="UniProtKB-UniRule"/>
</dbReference>
<dbReference type="GO" id="GO:0004634">
    <property type="term" value="F:phosphopyruvate hydratase activity"/>
    <property type="evidence" value="ECO:0007669"/>
    <property type="project" value="UniProtKB-UniRule"/>
</dbReference>
<dbReference type="GO" id="GO:0006096">
    <property type="term" value="P:glycolytic process"/>
    <property type="evidence" value="ECO:0007669"/>
    <property type="project" value="UniProtKB-UniRule"/>
</dbReference>
<dbReference type="CDD" id="cd03313">
    <property type="entry name" value="enolase"/>
    <property type="match status" value="1"/>
</dbReference>
<dbReference type="FunFam" id="3.20.20.120:FF:000001">
    <property type="entry name" value="Enolase"/>
    <property type="match status" value="1"/>
</dbReference>
<dbReference type="FunFam" id="3.30.390.10:FF:000001">
    <property type="entry name" value="Enolase"/>
    <property type="match status" value="1"/>
</dbReference>
<dbReference type="Gene3D" id="3.20.20.120">
    <property type="entry name" value="Enolase-like C-terminal domain"/>
    <property type="match status" value="1"/>
</dbReference>
<dbReference type="Gene3D" id="3.30.390.10">
    <property type="entry name" value="Enolase-like, N-terminal domain"/>
    <property type="match status" value="1"/>
</dbReference>
<dbReference type="HAMAP" id="MF_00318">
    <property type="entry name" value="Enolase"/>
    <property type="match status" value="1"/>
</dbReference>
<dbReference type="InterPro" id="IPR000941">
    <property type="entry name" value="Enolase"/>
</dbReference>
<dbReference type="InterPro" id="IPR036849">
    <property type="entry name" value="Enolase-like_C_sf"/>
</dbReference>
<dbReference type="InterPro" id="IPR029017">
    <property type="entry name" value="Enolase-like_N"/>
</dbReference>
<dbReference type="InterPro" id="IPR020810">
    <property type="entry name" value="Enolase_C"/>
</dbReference>
<dbReference type="InterPro" id="IPR020809">
    <property type="entry name" value="Enolase_CS"/>
</dbReference>
<dbReference type="InterPro" id="IPR020811">
    <property type="entry name" value="Enolase_N"/>
</dbReference>
<dbReference type="NCBIfam" id="TIGR01060">
    <property type="entry name" value="eno"/>
    <property type="match status" value="1"/>
</dbReference>
<dbReference type="PANTHER" id="PTHR11902">
    <property type="entry name" value="ENOLASE"/>
    <property type="match status" value="1"/>
</dbReference>
<dbReference type="PANTHER" id="PTHR11902:SF1">
    <property type="entry name" value="ENOLASE"/>
    <property type="match status" value="1"/>
</dbReference>
<dbReference type="Pfam" id="PF00113">
    <property type="entry name" value="Enolase_C"/>
    <property type="match status" value="1"/>
</dbReference>
<dbReference type="Pfam" id="PF03952">
    <property type="entry name" value="Enolase_N"/>
    <property type="match status" value="1"/>
</dbReference>
<dbReference type="PIRSF" id="PIRSF001400">
    <property type="entry name" value="Enolase"/>
    <property type="match status" value="1"/>
</dbReference>
<dbReference type="PRINTS" id="PR00148">
    <property type="entry name" value="ENOLASE"/>
</dbReference>
<dbReference type="SFLD" id="SFLDS00001">
    <property type="entry name" value="Enolase"/>
    <property type="match status" value="1"/>
</dbReference>
<dbReference type="SFLD" id="SFLDF00002">
    <property type="entry name" value="enolase"/>
    <property type="match status" value="1"/>
</dbReference>
<dbReference type="SMART" id="SM01192">
    <property type="entry name" value="Enolase_C"/>
    <property type="match status" value="1"/>
</dbReference>
<dbReference type="SMART" id="SM01193">
    <property type="entry name" value="Enolase_N"/>
    <property type="match status" value="1"/>
</dbReference>
<dbReference type="SUPFAM" id="SSF51604">
    <property type="entry name" value="Enolase C-terminal domain-like"/>
    <property type="match status" value="1"/>
</dbReference>
<dbReference type="SUPFAM" id="SSF54826">
    <property type="entry name" value="Enolase N-terminal domain-like"/>
    <property type="match status" value="1"/>
</dbReference>
<dbReference type="PROSITE" id="PS00164">
    <property type="entry name" value="ENOLASE"/>
    <property type="match status" value="1"/>
</dbReference>
<sequence length="431" mass="45818">MAKIINVIGREIMDSRGNPTVEAEVHLEGGFVGMAAAPSGASTGSREALELRDGDKSRYLGKGVLTAVANVNDLIRTALLGKDATAQAELDQIMIDLDGTENKDKLGANAILAVSLAAAKAAAAFKGIPLYAHIAELNGTPGQYSMPVPMMNILNGGEHADNNVDIQEFMVQPVGAKTFREALRMGAEIFHTLKKVLHDKGLSTSVGDEGGFAPNLASNADALAIIKEAVELAGYKLGTDVTLALDCAASEFYKDGKYDLAGEGKVFDSNGFSDFLKSLADQYPIVSIEDGLDESDWDGWAYQTQIMGDKIQLVGDDLFVTNTKILTRGIENGIANSILIKFNQIGSLTETLAAIRMAKEAGYTAVISHRSGETEDSTIADLAVGTAAGQIKTGSLCRSDRVAKYNQLLRIEEQLGEKAPYRGLKEIKGQA</sequence>
<gene>
    <name evidence="1" type="primary">eno</name>
    <name type="ordered locus">Sbal195_3279</name>
</gene>
<reference key="1">
    <citation type="submission" date="2007-11" db="EMBL/GenBank/DDBJ databases">
        <title>Complete sequence of chromosome of Shewanella baltica OS195.</title>
        <authorList>
            <consortium name="US DOE Joint Genome Institute"/>
            <person name="Copeland A."/>
            <person name="Lucas S."/>
            <person name="Lapidus A."/>
            <person name="Barry K."/>
            <person name="Glavina del Rio T."/>
            <person name="Dalin E."/>
            <person name="Tice H."/>
            <person name="Pitluck S."/>
            <person name="Chain P."/>
            <person name="Malfatti S."/>
            <person name="Shin M."/>
            <person name="Vergez L."/>
            <person name="Schmutz J."/>
            <person name="Larimer F."/>
            <person name="Land M."/>
            <person name="Hauser L."/>
            <person name="Kyrpides N."/>
            <person name="Kim E."/>
            <person name="Brettar I."/>
            <person name="Rodrigues J."/>
            <person name="Konstantinidis K."/>
            <person name="Klappenbach J."/>
            <person name="Hofle M."/>
            <person name="Tiedje J."/>
            <person name="Richardson P."/>
        </authorList>
    </citation>
    <scope>NUCLEOTIDE SEQUENCE [LARGE SCALE GENOMIC DNA]</scope>
    <source>
        <strain>OS195</strain>
    </source>
</reference>